<dbReference type="EMBL" id="CP000108">
    <property type="protein sequence ID" value="ABB28601.1"/>
    <property type="molecule type" value="Genomic_DNA"/>
</dbReference>
<dbReference type="SMR" id="Q3AQX4"/>
<dbReference type="STRING" id="340177.Cag_1341"/>
<dbReference type="KEGG" id="cch:Cag_1341"/>
<dbReference type="eggNOG" id="COG0322">
    <property type="taxonomic scope" value="Bacteria"/>
</dbReference>
<dbReference type="HOGENOM" id="CLU_014841_3_2_10"/>
<dbReference type="OrthoDB" id="9804933at2"/>
<dbReference type="GO" id="GO:0005737">
    <property type="term" value="C:cytoplasm"/>
    <property type="evidence" value="ECO:0007669"/>
    <property type="project" value="UniProtKB-SubCell"/>
</dbReference>
<dbReference type="GO" id="GO:0009380">
    <property type="term" value="C:excinuclease repair complex"/>
    <property type="evidence" value="ECO:0007669"/>
    <property type="project" value="InterPro"/>
</dbReference>
<dbReference type="GO" id="GO:0003677">
    <property type="term" value="F:DNA binding"/>
    <property type="evidence" value="ECO:0007669"/>
    <property type="project" value="UniProtKB-UniRule"/>
</dbReference>
<dbReference type="GO" id="GO:0009381">
    <property type="term" value="F:excinuclease ABC activity"/>
    <property type="evidence" value="ECO:0007669"/>
    <property type="project" value="UniProtKB-UniRule"/>
</dbReference>
<dbReference type="GO" id="GO:0006289">
    <property type="term" value="P:nucleotide-excision repair"/>
    <property type="evidence" value="ECO:0007669"/>
    <property type="project" value="UniProtKB-UniRule"/>
</dbReference>
<dbReference type="GO" id="GO:0009432">
    <property type="term" value="P:SOS response"/>
    <property type="evidence" value="ECO:0007669"/>
    <property type="project" value="UniProtKB-UniRule"/>
</dbReference>
<dbReference type="CDD" id="cd10434">
    <property type="entry name" value="GIY-YIG_UvrC_Cho"/>
    <property type="match status" value="1"/>
</dbReference>
<dbReference type="FunFam" id="3.30.420.340:FF:000001">
    <property type="entry name" value="UvrABC system protein C"/>
    <property type="match status" value="1"/>
</dbReference>
<dbReference type="FunFam" id="3.40.1440.10:FF:000001">
    <property type="entry name" value="UvrABC system protein C"/>
    <property type="match status" value="1"/>
</dbReference>
<dbReference type="Gene3D" id="1.10.150.20">
    <property type="entry name" value="5' to 3' exonuclease, C-terminal subdomain"/>
    <property type="match status" value="1"/>
</dbReference>
<dbReference type="Gene3D" id="3.40.1440.10">
    <property type="entry name" value="GIY-YIG endonuclease"/>
    <property type="match status" value="1"/>
</dbReference>
<dbReference type="Gene3D" id="4.10.860.10">
    <property type="entry name" value="UVR domain"/>
    <property type="match status" value="1"/>
</dbReference>
<dbReference type="Gene3D" id="3.30.420.340">
    <property type="entry name" value="UvrC, RNAse H endonuclease domain"/>
    <property type="match status" value="1"/>
</dbReference>
<dbReference type="HAMAP" id="MF_00203">
    <property type="entry name" value="UvrC"/>
    <property type="match status" value="1"/>
</dbReference>
<dbReference type="InterPro" id="IPR000305">
    <property type="entry name" value="GIY-YIG_endonuc"/>
</dbReference>
<dbReference type="InterPro" id="IPR035901">
    <property type="entry name" value="GIY-YIG_endonuc_sf"/>
</dbReference>
<dbReference type="InterPro" id="IPR047296">
    <property type="entry name" value="GIY-YIG_UvrC_Cho"/>
</dbReference>
<dbReference type="InterPro" id="IPR010994">
    <property type="entry name" value="RuvA_2-like"/>
</dbReference>
<dbReference type="InterPro" id="IPR001943">
    <property type="entry name" value="UVR_dom"/>
</dbReference>
<dbReference type="InterPro" id="IPR036876">
    <property type="entry name" value="UVR_dom_sf"/>
</dbReference>
<dbReference type="InterPro" id="IPR050066">
    <property type="entry name" value="UvrABC_protein_C"/>
</dbReference>
<dbReference type="InterPro" id="IPR004791">
    <property type="entry name" value="UvrC"/>
</dbReference>
<dbReference type="InterPro" id="IPR001162">
    <property type="entry name" value="UvrC_RNase_H_dom"/>
</dbReference>
<dbReference type="InterPro" id="IPR038476">
    <property type="entry name" value="UvrC_RNase_H_dom_sf"/>
</dbReference>
<dbReference type="NCBIfam" id="NF001824">
    <property type="entry name" value="PRK00558.1-5"/>
    <property type="match status" value="1"/>
</dbReference>
<dbReference type="NCBIfam" id="TIGR00194">
    <property type="entry name" value="uvrC"/>
    <property type="match status" value="1"/>
</dbReference>
<dbReference type="PANTHER" id="PTHR30562:SF1">
    <property type="entry name" value="UVRABC SYSTEM PROTEIN C"/>
    <property type="match status" value="1"/>
</dbReference>
<dbReference type="PANTHER" id="PTHR30562">
    <property type="entry name" value="UVRC/OXIDOREDUCTASE"/>
    <property type="match status" value="1"/>
</dbReference>
<dbReference type="Pfam" id="PF01541">
    <property type="entry name" value="GIY-YIG"/>
    <property type="match status" value="1"/>
</dbReference>
<dbReference type="Pfam" id="PF14520">
    <property type="entry name" value="HHH_5"/>
    <property type="match status" value="1"/>
</dbReference>
<dbReference type="Pfam" id="PF02151">
    <property type="entry name" value="UVR"/>
    <property type="match status" value="1"/>
</dbReference>
<dbReference type="Pfam" id="PF22920">
    <property type="entry name" value="UvrC_RNaseH"/>
    <property type="match status" value="1"/>
</dbReference>
<dbReference type="Pfam" id="PF08459">
    <property type="entry name" value="UvrC_RNaseH_dom"/>
    <property type="match status" value="1"/>
</dbReference>
<dbReference type="SMART" id="SM00465">
    <property type="entry name" value="GIYc"/>
    <property type="match status" value="1"/>
</dbReference>
<dbReference type="SUPFAM" id="SSF46600">
    <property type="entry name" value="C-terminal UvrC-binding domain of UvrB"/>
    <property type="match status" value="1"/>
</dbReference>
<dbReference type="SUPFAM" id="SSF82771">
    <property type="entry name" value="GIY-YIG endonuclease"/>
    <property type="match status" value="1"/>
</dbReference>
<dbReference type="SUPFAM" id="SSF47781">
    <property type="entry name" value="RuvA domain 2-like"/>
    <property type="match status" value="1"/>
</dbReference>
<dbReference type="PROSITE" id="PS50164">
    <property type="entry name" value="GIY_YIG"/>
    <property type="match status" value="1"/>
</dbReference>
<dbReference type="PROSITE" id="PS50151">
    <property type="entry name" value="UVR"/>
    <property type="match status" value="1"/>
</dbReference>
<dbReference type="PROSITE" id="PS50165">
    <property type="entry name" value="UVRC"/>
    <property type="match status" value="1"/>
</dbReference>
<organism>
    <name type="scientific">Chlorobium chlorochromatii (strain CaD3)</name>
    <dbReference type="NCBI Taxonomy" id="340177"/>
    <lineage>
        <taxon>Bacteria</taxon>
        <taxon>Pseudomonadati</taxon>
        <taxon>Chlorobiota</taxon>
        <taxon>Chlorobiia</taxon>
        <taxon>Chlorobiales</taxon>
        <taxon>Chlorobiaceae</taxon>
        <taxon>Chlorobium/Pelodictyon group</taxon>
        <taxon>Chlorobium</taxon>
    </lineage>
</organism>
<accession>Q3AQX4</accession>
<proteinExistence type="inferred from homology"/>
<feature type="chain" id="PRO_0000227414" description="UvrABC system protein C">
    <location>
        <begin position="1"/>
        <end position="629"/>
    </location>
</feature>
<feature type="domain" description="GIY-YIG" evidence="1">
    <location>
        <begin position="26"/>
        <end position="105"/>
    </location>
</feature>
<feature type="domain" description="UVR" evidence="1">
    <location>
        <begin position="219"/>
        <end position="254"/>
    </location>
</feature>
<sequence>MEPLDALEKHGDIKKVLTEKLATLPTSPGIYQFKNSAGRIIYVGKAKNLRNRVRSYFRNSHQLFGKTLVLVSHIDDLEVIITSSEVEALILENNLIKELKPRYNVNLKDDKTYPYLVITNEPYPRILFTRHRRNDGSIAFGPYTEARQLRSILDLIGSIFPVRSCKLRLTPDAIASGKYKVCLDYHIHKCKGACEGLQPEDEYRQMIDEIIKLLKGKTSALIRSLTENMHLAATELRFEQAAEIKAQIESLKRYAERQKVVAADMVDRDVFAIAAGEDDACGVIFKIREGKLLGSQRIYINNTNGESEASMQLRMLEKFYVESIEPVPDEILLQEALSEEEEETLRAFLLVKAKNEGQEKKGIRLVVPQIGDKAHLVGMCRQNARHHLEEYLIQKQKRGEAAREHFGLTALKELLHLPTLPQRIECFDNSHFQGTDYVSSMVCFEKGKTKKSDYRKFKIKTFEGSDDYAAMDEVLRRRYSGSLTESLALPDLIVVDGGKGQVNTAYKTLQELGVTIPVIGLAKRIEEIFTPHSSDPFNLPKTSPALKLLQQLRDEAHRFAITYHRKLRSDRTLQTELTTIAGIGEKTAFKLLEHFGSVESVAQASREELQAVIGAKAGETVYTFYRPEG</sequence>
<keyword id="KW-0963">Cytoplasm</keyword>
<keyword id="KW-0227">DNA damage</keyword>
<keyword id="KW-0228">DNA excision</keyword>
<keyword id="KW-0234">DNA repair</keyword>
<keyword id="KW-0267">Excision nuclease</keyword>
<keyword id="KW-0742">SOS response</keyword>
<protein>
    <recommendedName>
        <fullName evidence="1">UvrABC system protein C</fullName>
        <shortName evidence="1">Protein UvrC</shortName>
    </recommendedName>
    <alternativeName>
        <fullName evidence="1">Excinuclease ABC subunit C</fullName>
    </alternativeName>
</protein>
<evidence type="ECO:0000255" key="1">
    <source>
        <dbReference type="HAMAP-Rule" id="MF_00203"/>
    </source>
</evidence>
<gene>
    <name evidence="1" type="primary">uvrC</name>
    <name type="ordered locus">Cag_1341</name>
</gene>
<name>UVRC_CHLCH</name>
<comment type="function">
    <text evidence="1">The UvrABC repair system catalyzes the recognition and processing of DNA lesions. UvrC both incises the 5' and 3' sides of the lesion. The N-terminal half is responsible for the 3' incision and the C-terminal half is responsible for the 5' incision.</text>
</comment>
<comment type="subunit">
    <text evidence="1">Interacts with UvrB in an incision complex.</text>
</comment>
<comment type="subcellular location">
    <subcellularLocation>
        <location evidence="1">Cytoplasm</location>
    </subcellularLocation>
</comment>
<comment type="similarity">
    <text evidence="1">Belongs to the UvrC family.</text>
</comment>
<reference key="1">
    <citation type="submission" date="2005-08" db="EMBL/GenBank/DDBJ databases">
        <title>Complete sequence of Chlorobium chlorochromatii CaD3.</title>
        <authorList>
            <consortium name="US DOE Joint Genome Institute"/>
            <person name="Copeland A."/>
            <person name="Lucas S."/>
            <person name="Lapidus A."/>
            <person name="Barry K."/>
            <person name="Detter J.C."/>
            <person name="Glavina T."/>
            <person name="Hammon N."/>
            <person name="Israni S."/>
            <person name="Pitluck S."/>
            <person name="Bryant D."/>
            <person name="Schmutz J."/>
            <person name="Larimer F."/>
            <person name="Land M."/>
            <person name="Kyrpides N."/>
            <person name="Ivanova N."/>
            <person name="Richardson P."/>
        </authorList>
    </citation>
    <scope>NUCLEOTIDE SEQUENCE [LARGE SCALE GENOMIC DNA]</scope>
    <source>
        <strain>CaD3</strain>
    </source>
</reference>